<proteinExistence type="inferred from homology"/>
<comment type="function">
    <text evidence="1">Catalyzes the 2'-O-methylation at nucleotide C2498 in 23S rRNA.</text>
</comment>
<comment type="catalytic activity">
    <reaction evidence="1">
        <text>cytidine(2498) in 23S rRNA + S-adenosyl-L-methionine = 2'-O-methylcytidine(2498) in 23S rRNA + S-adenosyl-L-homocysteine + H(+)</text>
        <dbReference type="Rhea" id="RHEA:42788"/>
        <dbReference type="Rhea" id="RHEA-COMP:10244"/>
        <dbReference type="Rhea" id="RHEA-COMP:10245"/>
        <dbReference type="ChEBI" id="CHEBI:15378"/>
        <dbReference type="ChEBI" id="CHEBI:57856"/>
        <dbReference type="ChEBI" id="CHEBI:59789"/>
        <dbReference type="ChEBI" id="CHEBI:74495"/>
        <dbReference type="ChEBI" id="CHEBI:82748"/>
        <dbReference type="EC" id="2.1.1.186"/>
    </reaction>
</comment>
<comment type="subunit">
    <text evidence="1">Monomer.</text>
</comment>
<comment type="subcellular location">
    <subcellularLocation>
        <location evidence="1">Cytoplasm</location>
    </subcellularLocation>
</comment>
<comment type="similarity">
    <text evidence="1">Belongs to the class I-like SAM-binding methyltransferase superfamily. RNA methyltransferase RlmE family. RlmM subfamily.</text>
</comment>
<keyword id="KW-0963">Cytoplasm</keyword>
<keyword id="KW-0489">Methyltransferase</keyword>
<keyword id="KW-0698">rRNA processing</keyword>
<keyword id="KW-0949">S-adenosyl-L-methionine</keyword>
<keyword id="KW-0808">Transferase</keyword>
<feature type="chain" id="PRO_1000087735" description="Ribosomal RNA large subunit methyltransferase M">
    <location>
        <begin position="1"/>
        <end position="350"/>
    </location>
</feature>
<feature type="active site" description="Proton acceptor" evidence="1">
    <location>
        <position position="301"/>
    </location>
</feature>
<feature type="binding site" evidence="1">
    <location>
        <position position="184"/>
    </location>
    <ligand>
        <name>S-adenosyl-L-methionine</name>
        <dbReference type="ChEBI" id="CHEBI:59789"/>
    </ligand>
</feature>
<feature type="binding site" evidence="1">
    <location>
        <begin position="217"/>
        <end position="220"/>
    </location>
    <ligand>
        <name>S-adenosyl-L-methionine</name>
        <dbReference type="ChEBI" id="CHEBI:59789"/>
    </ligand>
</feature>
<feature type="binding site" evidence="1">
    <location>
        <position position="236"/>
    </location>
    <ligand>
        <name>S-adenosyl-L-methionine</name>
        <dbReference type="ChEBI" id="CHEBI:59789"/>
    </ligand>
</feature>
<feature type="binding site" evidence="1">
    <location>
        <position position="256"/>
    </location>
    <ligand>
        <name>S-adenosyl-L-methionine</name>
        <dbReference type="ChEBI" id="CHEBI:59789"/>
    </ligand>
</feature>
<feature type="binding site" evidence="1">
    <location>
        <position position="272"/>
    </location>
    <ligand>
        <name>S-adenosyl-L-methionine</name>
        <dbReference type="ChEBI" id="CHEBI:59789"/>
    </ligand>
</feature>
<evidence type="ECO:0000255" key="1">
    <source>
        <dbReference type="HAMAP-Rule" id="MF_01551"/>
    </source>
</evidence>
<dbReference type="EC" id="2.1.1.186" evidence="1"/>
<dbReference type="EMBL" id="CP000749">
    <property type="protein sequence ID" value="ABR70854.1"/>
    <property type="molecule type" value="Genomic_DNA"/>
</dbReference>
<dbReference type="SMR" id="A6VWM5"/>
<dbReference type="STRING" id="400668.Mmwyl1_1930"/>
<dbReference type="KEGG" id="mmw:Mmwyl1_1930"/>
<dbReference type="eggNOG" id="COG2933">
    <property type="taxonomic scope" value="Bacteria"/>
</dbReference>
<dbReference type="HOGENOM" id="CLU_043780_0_0_6"/>
<dbReference type="OrthoDB" id="154490at2"/>
<dbReference type="GO" id="GO:0005737">
    <property type="term" value="C:cytoplasm"/>
    <property type="evidence" value="ECO:0007669"/>
    <property type="project" value="UniProtKB-SubCell"/>
</dbReference>
<dbReference type="GO" id="GO:0008757">
    <property type="term" value="F:S-adenosylmethionine-dependent methyltransferase activity"/>
    <property type="evidence" value="ECO:0007669"/>
    <property type="project" value="UniProtKB-UniRule"/>
</dbReference>
<dbReference type="GO" id="GO:0032259">
    <property type="term" value="P:methylation"/>
    <property type="evidence" value="ECO:0007669"/>
    <property type="project" value="UniProtKB-KW"/>
</dbReference>
<dbReference type="GO" id="GO:0006364">
    <property type="term" value="P:rRNA processing"/>
    <property type="evidence" value="ECO:0007669"/>
    <property type="project" value="UniProtKB-UniRule"/>
</dbReference>
<dbReference type="Gene3D" id="3.30.2300.20">
    <property type="match status" value="1"/>
</dbReference>
<dbReference type="Gene3D" id="3.30.70.2810">
    <property type="match status" value="1"/>
</dbReference>
<dbReference type="Gene3D" id="3.40.50.150">
    <property type="entry name" value="Vaccinia Virus protein VP39"/>
    <property type="match status" value="1"/>
</dbReference>
<dbReference type="HAMAP" id="MF_01551">
    <property type="entry name" value="23SrRNA_methyltr_M"/>
    <property type="match status" value="1"/>
</dbReference>
<dbReference type="InterPro" id="IPR040739">
    <property type="entry name" value="RlmM_FDX"/>
</dbReference>
<dbReference type="InterPro" id="IPR048646">
    <property type="entry name" value="RlmM_THUMP-like"/>
</dbReference>
<dbReference type="InterPro" id="IPR002877">
    <property type="entry name" value="RNA_MeTrfase_FtsJ_dom"/>
</dbReference>
<dbReference type="InterPro" id="IPR011224">
    <property type="entry name" value="rRNA_MeTrfase_M"/>
</dbReference>
<dbReference type="InterPro" id="IPR029063">
    <property type="entry name" value="SAM-dependent_MTases_sf"/>
</dbReference>
<dbReference type="NCBIfam" id="NF008734">
    <property type="entry name" value="PRK11760.1"/>
    <property type="match status" value="1"/>
</dbReference>
<dbReference type="PANTHER" id="PTHR37524">
    <property type="entry name" value="RIBOSOMAL RNA LARGE SUBUNIT METHYLTRANSFERASE M"/>
    <property type="match status" value="1"/>
</dbReference>
<dbReference type="PANTHER" id="PTHR37524:SF2">
    <property type="entry name" value="RIBOSOMAL RNA METHYLTRANSFERASE FTSJ DOMAIN-CONTAINING PROTEIN"/>
    <property type="match status" value="1"/>
</dbReference>
<dbReference type="Pfam" id="PF01728">
    <property type="entry name" value="FtsJ"/>
    <property type="match status" value="1"/>
</dbReference>
<dbReference type="Pfam" id="PF18125">
    <property type="entry name" value="RlmM_FDX"/>
    <property type="match status" value="1"/>
</dbReference>
<dbReference type="Pfam" id="PF21239">
    <property type="entry name" value="RLMM_N"/>
    <property type="match status" value="1"/>
</dbReference>
<dbReference type="PIRSF" id="PIRSF028774">
    <property type="entry name" value="UCP028774"/>
    <property type="match status" value="1"/>
</dbReference>
<dbReference type="SUPFAM" id="SSF53335">
    <property type="entry name" value="S-adenosyl-L-methionine-dependent methyltransferases"/>
    <property type="match status" value="1"/>
</dbReference>
<name>RLMM_MARMS</name>
<gene>
    <name evidence="1" type="primary">rlmM</name>
    <name type="ordered locus">Mmwyl1_1930</name>
</gene>
<sequence length="350" mass="39414">MKNVLVYCRQGFEKDCAAELSEVASSKGFYGYAKVVPDAGYIVYNFDQADAGETLIQQLNFNRLIFARQIIAVNDVIELEQGGRVESLLEAARELPLAEEIWIETADTNDAKALSGLIKKLEKPLREGWKRSGVLRNKAVGVRHHVFMLDGEAAYLGVSYAACRSEFPMGIRRLRFPAAGPSRSTLKLEEAFLQFVPEQTLEADLTEGMTAVDLGAAPGGWTYQFVKKGINVIAIDNGPMQKELMSTGLVEHEKADGFKYEPPYTVDWLVCDMVERPIKVAELMAKWLASGWTRRAIFNLKLPMKKRYQEVTLCLQTMEGLLRKAGVSYQYQVKHLYHDREEVTVCIMVK</sequence>
<protein>
    <recommendedName>
        <fullName evidence="1">Ribosomal RNA large subunit methyltransferase M</fullName>
        <ecNumber evidence="1">2.1.1.186</ecNumber>
    </recommendedName>
    <alternativeName>
        <fullName evidence="1">23S rRNA (cytidine2498-2'-O)-methyltransferase</fullName>
    </alternativeName>
    <alternativeName>
        <fullName evidence="1">23S rRNA 2'-O-ribose methyltransferase RlmM</fullName>
    </alternativeName>
</protein>
<organism>
    <name type="scientific">Marinomonas sp. (strain MWYL1)</name>
    <dbReference type="NCBI Taxonomy" id="400668"/>
    <lineage>
        <taxon>Bacteria</taxon>
        <taxon>Pseudomonadati</taxon>
        <taxon>Pseudomonadota</taxon>
        <taxon>Gammaproteobacteria</taxon>
        <taxon>Oceanospirillales</taxon>
        <taxon>Oceanospirillaceae</taxon>
        <taxon>Marinomonas</taxon>
    </lineage>
</organism>
<accession>A6VWM5</accession>
<reference key="1">
    <citation type="submission" date="2007-06" db="EMBL/GenBank/DDBJ databases">
        <title>Complete sequence of Marinomonas sp. MWYL1.</title>
        <authorList>
            <consortium name="US DOE Joint Genome Institute"/>
            <person name="Copeland A."/>
            <person name="Lucas S."/>
            <person name="Lapidus A."/>
            <person name="Barry K."/>
            <person name="Glavina del Rio T."/>
            <person name="Dalin E."/>
            <person name="Tice H."/>
            <person name="Pitluck S."/>
            <person name="Kiss H."/>
            <person name="Brettin T."/>
            <person name="Bruce D."/>
            <person name="Detter J.C."/>
            <person name="Han C."/>
            <person name="Schmutz J."/>
            <person name="Larimer F."/>
            <person name="Land M."/>
            <person name="Hauser L."/>
            <person name="Kyrpides N."/>
            <person name="Kim E."/>
            <person name="Johnston A.W.B."/>
            <person name="Todd J.D."/>
            <person name="Rogers R."/>
            <person name="Wexler M."/>
            <person name="Bond P.L."/>
            <person name="Li Y."/>
            <person name="Richardson P."/>
        </authorList>
    </citation>
    <scope>NUCLEOTIDE SEQUENCE [LARGE SCALE GENOMIC DNA]</scope>
    <source>
        <strain>MWYL1</strain>
    </source>
</reference>